<sequence length="444" mass="50966">MSSSYDEASLAPEETTDSFWEVGNYKRTVKRIDDGHRLCNDLMNCVQERAKIEKAYGQQLTDWAKRWRQLIEKGPQYGSLERAWGAIMTEADKVSELHQEVKNNLLNEDLEKVKNWQKDAYHKQIMGGFKETKEAEDGFRKAQKPWAKKMKELEAAKKAYHLACKEEKLAMTREMNSKTEQSVTPEQQKKLQDKVDKCKQDVQKTQEKYEKVLEDVGKTTPQYMENMEQVFEQCQQFEEKRLVFLKEVLLDIKRHLNLAENSSYIHVYRELEQAIRGADAQEDLRWFRSTSGPGMPMNWPQFEEWNPDLPHTTTKKEKQPKKAEGVALTNATGAVESTSQAGDRGSVSSYDRGQPYATEWSDDESGNPFGGSETNGGANPFEDDSKGVRVRALYDYDGQEQDELSFKAGDELTKLGEEDEQGWCRGRLDSGQLGLYPANYVEAI</sequence>
<comment type="function">
    <text evidence="1 8 9 10">Plays a role in the reorganization of the microtubule cytoskeleton via its interaction with MAPT; this decreases microtubule stability and inhibits MAPT-induced microtubule polymerization. Plays a role in cellular transport processes by recruiting DNM1, DNM2 and DNM3 to membranes. Plays a role in the reorganization of the actin cytoskeleton and in neuron morphogenesis via its interaction with COBL and WASL, and by recruiting COBL to the cell cortex. Plays a role in the regulation of neurite formation, neurite branching and the regulation of neurite length. Required for normal synaptic vesicle endocytosis; this process retrieves previously released neurotransmitters to accommodate multiple cycles of neurotransmission. Required for normal excitatory and inhibitory synaptic transmission (By similarity). Binds to membranes via its F-BAR domain and mediates membrane tubulation.</text>
</comment>
<comment type="subunit">
    <text evidence="1 8 10">May form heterooligomers with other PACSINs. Interacts with MAPT. Interacts with TRPV4 (By similarity). Interacts (via SH3 domain) with SYNJ1 and WASL. Interacts with DNM2 and DNM3. Interacts with both COBL and DBNL. Identified in a complex composed of COBL, PACSIN1 and WASL. Interacts with EHD1 and EHD3 (By similarity). Homodimer. Interacts (via SH3 domain) with DNM1; the interaction is reduced by DNM1 phosphorylation.</text>
</comment>
<comment type="interaction">
    <interactant intactId="EBI-721769">
        <id>Q9BY11</id>
    </interactant>
    <interactant intactId="EBI-1536151">
        <id>O14672</id>
        <label>ADAM10</label>
    </interactant>
    <organismsDiffer>false</organismsDiffer>
    <experiments>2</experiments>
</comment>
<comment type="interaction">
    <interactant intactId="EBI-721769">
        <id>Q9BY11</id>
    </interactant>
    <interactant intactId="EBI-3446582">
        <id>O75128</id>
        <label>COBL</label>
    </interactant>
    <organismsDiffer>false</organismsDiffer>
    <experiments>5</experiments>
</comment>
<comment type="interaction">
    <interactant intactId="EBI-721769">
        <id>Q9BY11</id>
    </interactant>
    <interactant intactId="EBI-2835780">
        <id>Q53SF7</id>
        <label>COBLL1</label>
    </interactant>
    <organismsDiffer>false</organismsDiffer>
    <experiments>3</experiments>
</comment>
<comment type="interaction">
    <interactant intactId="EBI-721769">
        <id>Q9BY11</id>
    </interactant>
    <interactant intactId="EBI-495538">
        <id>P48023</id>
        <label>FASLG</label>
    </interactant>
    <organismsDiffer>false</organismsDiffer>
    <experiments>4</experiments>
</comment>
<comment type="interaction">
    <interactant intactId="EBI-721769">
        <id>Q9BY11</id>
    </interactant>
    <interactant intactId="EBI-466029">
        <id>P42858</id>
        <label>HTT</label>
    </interactant>
    <organismsDiffer>false</organismsDiffer>
    <experiments>3</experiments>
</comment>
<comment type="interaction">
    <interactant intactId="EBI-721769">
        <id>Q9BY11</id>
    </interactant>
    <interactant intactId="EBI-744871">
        <id>O00746</id>
        <label>NME4</label>
    </interactant>
    <organismsDiffer>false</organismsDiffer>
    <experiments>3</experiments>
</comment>
<comment type="interaction">
    <interactant intactId="EBI-721769">
        <id>Q9BY11</id>
    </interactant>
    <interactant intactId="EBI-742503">
        <id>Q9UNF0</id>
        <label>PACSIN2</label>
    </interactant>
    <organismsDiffer>false</organismsDiffer>
    <experiments>12</experiments>
</comment>
<comment type="interaction">
    <interactant intactId="EBI-721769">
        <id>Q9BY11</id>
    </interactant>
    <interactant intactId="EBI-77926">
        <id>Q9UKS6</id>
        <label>PACSIN3</label>
    </interactant>
    <organismsDiffer>false</organismsDiffer>
    <experiments>10</experiments>
</comment>
<comment type="interaction">
    <interactant intactId="EBI-721769">
        <id>Q9BY11</id>
    </interactant>
    <interactant intactId="EBI-742388">
        <id>Q9H8W4</id>
        <label>PLEKHF2</label>
    </interactant>
    <organismsDiffer>false</organismsDiffer>
    <experiments>3</experiments>
</comment>
<comment type="interaction">
    <interactant intactId="EBI-721769">
        <id>Q9BY11</id>
    </interactant>
    <interactant intactId="EBI-752420">
        <id>Q9NUX5</id>
        <label>POT1</label>
    </interactant>
    <organismsDiffer>false</organismsDiffer>
    <experiments>2</experiments>
</comment>
<comment type="interaction">
    <interactant intactId="EBI-721769">
        <id>Q9BY11</id>
    </interactant>
    <interactant intactId="EBI-2822550">
        <id>Q8IYM2</id>
        <label>SLFN12</label>
    </interactant>
    <organismsDiffer>false</organismsDiffer>
    <experiments>3</experiments>
</comment>
<comment type="interaction">
    <interactant intactId="EBI-721769">
        <id>Q9BY11</id>
    </interactant>
    <interactant intactId="EBI-1752602">
        <id>Q9UMY4</id>
        <label>SNX12</label>
    </interactant>
    <organismsDiffer>false</organismsDiffer>
    <experiments>3</experiments>
</comment>
<comment type="subcellular location">
    <subcellularLocation>
        <location evidence="1">Cytoplasm</location>
    </subcellularLocation>
    <subcellularLocation>
        <location evidence="1">Cell projection</location>
    </subcellularLocation>
    <subcellularLocation>
        <location evidence="1">Synapse</location>
        <location evidence="1">Synaptosome</location>
    </subcellularLocation>
    <subcellularLocation>
        <location evidence="1">Cell projection</location>
        <location evidence="1">Ruffle membrane</location>
    </subcellularLocation>
    <subcellularLocation>
        <location>Membrane</location>
        <topology>Peripheral membrane protein</topology>
    </subcellularLocation>
    <subcellularLocation>
        <location evidence="1">Cytoplasmic vesicle membrane</location>
        <topology evidence="1">Peripheral membrane protein</topology>
    </subcellularLocation>
    <subcellularLocation>
        <location evidence="1">Synapse</location>
    </subcellularLocation>
    <subcellularLocation>
        <location evidence="1">Cytoplasm</location>
        <location evidence="1">Cytosol</location>
    </subcellularLocation>
    <subcellularLocation>
        <location evidence="1">Cell membrane</location>
        <topology evidence="1">Peripheral membrane protein</topology>
        <orientation evidence="1">Cytoplasmic side</orientation>
    </subcellularLocation>
    <text evidence="1">Colocalizes with MAPT in axons. In primary neuronal cultures, present at a high level in presynaptic nerve terminals and in the cell body. Colocalizes with DNM1 at vesicular structures in the cell body and neurites (By similarity). Associates with membranes via its F-BAR domain.</text>
</comment>
<comment type="tissue specificity">
    <text evidence="7">Highly expressed in brain and, at much lower levels, in heart and pancreas.</text>
</comment>
<comment type="domain">
    <text evidence="1">The F-BAR domain forms a coiled coil and mediates membrane-binding and membrane tubulation. In the autoinhibited conformation, interaction with the SH3 domain inhibits membrane tubulation mediated by the F-BAR domain. DNM1 binding abolishes autoinhibition (By similarity).</text>
</comment>
<comment type="PTM">
    <text evidence="11">Phosphorylated by casein kinase 2 (CK2) and protein kinase C (PKC).</text>
</comment>
<comment type="similarity">
    <text evidence="11">Belongs to the PACSIN family.</text>
</comment>
<comment type="sequence caution" evidence="11">
    <conflict type="erroneous initiation">
        <sequence resource="EMBL-CDS" id="BAA92617"/>
    </conflict>
    <text>Extended N-terminus.</text>
</comment>
<gene>
    <name type="primary">PACSIN1</name>
    <name type="synonym">KIAA1379</name>
</gene>
<feature type="chain" id="PRO_0000161792" description="Protein kinase C and casein kinase substrate in neurons protein 1">
    <location>
        <begin position="1"/>
        <end position="444"/>
    </location>
</feature>
<feature type="domain" description="F-BAR" evidence="5">
    <location>
        <begin position="13"/>
        <end position="283"/>
    </location>
</feature>
<feature type="domain" description="SH3" evidence="4">
    <location>
        <begin position="385"/>
        <end position="444"/>
    </location>
</feature>
<feature type="region of interest" description="Disordered" evidence="6">
    <location>
        <begin position="175"/>
        <end position="194"/>
    </location>
</feature>
<feature type="region of interest" description="Disordered" evidence="6">
    <location>
        <begin position="309"/>
        <end position="386"/>
    </location>
</feature>
<feature type="coiled-coil region">
    <location>
        <begin position="26"/>
        <end position="275"/>
    </location>
</feature>
<feature type="compositionally biased region" description="Basic and acidic residues" evidence="6">
    <location>
        <begin position="314"/>
        <end position="324"/>
    </location>
</feature>
<feature type="compositionally biased region" description="Polar residues" evidence="6">
    <location>
        <begin position="329"/>
        <end position="351"/>
    </location>
</feature>
<feature type="modified residue" description="Phosphoserine" evidence="3">
    <location>
        <position position="2"/>
    </location>
</feature>
<feature type="modified residue" description="Phosphoserine" evidence="3">
    <location>
        <position position="79"/>
    </location>
</feature>
<feature type="modified residue" description="Phosphothreonine" evidence="3">
    <location>
        <position position="184"/>
    </location>
</feature>
<feature type="modified residue" description="Phosphoserine" evidence="2">
    <location>
        <position position="346"/>
    </location>
</feature>
<feature type="modified residue" description="Phosphoserine" evidence="2">
    <location>
        <position position="348"/>
    </location>
</feature>
<feature type="modified residue" description="Phosphoserine" evidence="3">
    <location>
        <position position="349"/>
    </location>
</feature>
<feature type="modified residue" description="Phosphoserine" evidence="2">
    <location>
        <position position="361"/>
    </location>
</feature>
<feature type="modified residue" description="Phosphoserine" evidence="3">
    <location>
        <position position="365"/>
    </location>
</feature>
<feature type="modified residue" description="Phosphotyrosine" evidence="2">
    <location>
        <position position="394"/>
    </location>
</feature>
<feature type="modified residue" description="Phosphoserine" evidence="2">
    <location>
        <position position="405"/>
    </location>
</feature>
<feature type="modified residue" description="Phosphoserine" evidence="2">
    <location>
        <position position="430"/>
    </location>
</feature>
<feature type="sequence variant" id="VAR_053554" description="In dbSNP:rs41312309.">
    <original>A</original>
    <variation>V</variation>
    <location>
        <position position="334"/>
    </location>
</feature>
<feature type="mutagenesis site" description="Reduces membrane-binding. Abolishes membrane tubulation." evidence="8">
    <original>I</original>
    <variation>E</variation>
    <location>
        <position position="125"/>
    </location>
</feature>
<feature type="mutagenesis site" description="Reduces membrane-binding. Abolishes membrane tubulation." evidence="8">
    <original>M</original>
    <variation>E</variation>
    <location>
        <position position="126"/>
    </location>
</feature>
<feature type="turn" evidence="12">
    <location>
        <begin position="22"/>
        <end position="25"/>
    </location>
</feature>
<feature type="helix" evidence="12">
    <location>
        <begin position="26"/>
        <end position="73"/>
    </location>
</feature>
<feature type="helix" evidence="12">
    <location>
        <begin position="78"/>
        <end position="107"/>
    </location>
</feature>
<feature type="helix" evidence="12">
    <location>
        <begin position="109"/>
        <end position="120"/>
    </location>
</feature>
<feature type="strand" evidence="12">
    <location>
        <begin position="127"/>
        <end position="129"/>
    </location>
</feature>
<feature type="helix" evidence="12">
    <location>
        <begin position="130"/>
        <end position="170"/>
    </location>
</feature>
<feature type="turn" evidence="13">
    <location>
        <begin position="176"/>
        <end position="179"/>
    </location>
</feature>
<feature type="helix" evidence="12">
    <location>
        <begin position="193"/>
        <end position="256"/>
    </location>
</feature>
<feature type="helix" evidence="12">
    <location>
        <begin position="258"/>
        <end position="260"/>
    </location>
</feature>
<feature type="turn" evidence="12">
    <location>
        <begin position="262"/>
        <end position="264"/>
    </location>
</feature>
<feature type="helix" evidence="12">
    <location>
        <begin position="265"/>
        <end position="275"/>
    </location>
</feature>
<feature type="helix" evidence="12">
    <location>
        <begin position="280"/>
        <end position="291"/>
    </location>
</feature>
<accession>Q9BY11</accession>
<accession>Q9P2G8</accession>
<name>PACN1_HUMAN</name>
<proteinExistence type="evidence at protein level"/>
<dbReference type="EMBL" id="AF242529">
    <property type="protein sequence ID" value="AAK29206.1"/>
    <property type="molecule type" value="mRNA"/>
</dbReference>
<dbReference type="EMBL" id="AB037800">
    <property type="protein sequence ID" value="BAA92617.2"/>
    <property type="status" value="ALT_INIT"/>
    <property type="molecule type" value="mRNA"/>
</dbReference>
<dbReference type="EMBL" id="AL834211">
    <property type="protein sequence ID" value="CAD38895.1"/>
    <property type="molecule type" value="mRNA"/>
</dbReference>
<dbReference type="EMBL" id="BC040228">
    <property type="protein sequence ID" value="AAH40228.1"/>
    <property type="molecule type" value="mRNA"/>
</dbReference>
<dbReference type="CCDS" id="CCDS4793.1"/>
<dbReference type="RefSeq" id="NP_001186512.1">
    <property type="nucleotide sequence ID" value="NM_001199583.3"/>
</dbReference>
<dbReference type="RefSeq" id="NP_065855.1">
    <property type="nucleotide sequence ID" value="NM_020804.5"/>
</dbReference>
<dbReference type="RefSeq" id="XP_011512843.1">
    <property type="nucleotide sequence ID" value="XM_011514541.2"/>
</dbReference>
<dbReference type="RefSeq" id="XP_047274645.1">
    <property type="nucleotide sequence ID" value="XM_047418689.1"/>
</dbReference>
<dbReference type="RefSeq" id="XP_054211239.1">
    <property type="nucleotide sequence ID" value="XM_054355264.1"/>
</dbReference>
<dbReference type="RefSeq" id="XP_054211240.1">
    <property type="nucleotide sequence ID" value="XM_054355265.1"/>
</dbReference>
<dbReference type="PDB" id="3HAH">
    <property type="method" value="X-ray"/>
    <property type="resolution" value="2.77 A"/>
    <property type="chains" value="A/B=1-325"/>
</dbReference>
<dbReference type="PDB" id="3HAI">
    <property type="method" value="X-ray"/>
    <property type="resolution" value="2.88 A"/>
    <property type="chains" value="A/B/C/D=1-308"/>
</dbReference>
<dbReference type="PDB" id="3Q84">
    <property type="method" value="X-ray"/>
    <property type="resolution" value="2.80 A"/>
    <property type="chains" value="A/B/G/H/M/N=14-308"/>
</dbReference>
<dbReference type="PDB" id="3QNI">
    <property type="method" value="X-ray"/>
    <property type="resolution" value="2.80 A"/>
    <property type="chains" value="A/B=1-307"/>
</dbReference>
<dbReference type="PDBsum" id="3HAH"/>
<dbReference type="PDBsum" id="3HAI"/>
<dbReference type="PDBsum" id="3Q84"/>
<dbReference type="PDBsum" id="3QNI"/>
<dbReference type="SMR" id="Q9BY11"/>
<dbReference type="BioGRID" id="119018">
    <property type="interactions" value="61"/>
</dbReference>
<dbReference type="CORUM" id="Q9BY11"/>
<dbReference type="FunCoup" id="Q9BY11">
    <property type="interactions" value="916"/>
</dbReference>
<dbReference type="IntAct" id="Q9BY11">
    <property type="interactions" value="48"/>
</dbReference>
<dbReference type="MINT" id="Q9BY11"/>
<dbReference type="STRING" id="9606.ENSP00000484060"/>
<dbReference type="iPTMnet" id="Q9BY11"/>
<dbReference type="PhosphoSitePlus" id="Q9BY11"/>
<dbReference type="SwissPalm" id="Q9BY11"/>
<dbReference type="BioMuta" id="PACSIN1"/>
<dbReference type="DMDM" id="22256962"/>
<dbReference type="jPOST" id="Q9BY11"/>
<dbReference type="MassIVE" id="Q9BY11"/>
<dbReference type="PaxDb" id="9606-ENSP00000484060"/>
<dbReference type="PeptideAtlas" id="Q9BY11"/>
<dbReference type="ProteomicsDB" id="79560"/>
<dbReference type="Pumba" id="Q9BY11"/>
<dbReference type="ABCD" id="Q9BY11">
    <property type="antibodies" value="1 sequenced antibody"/>
</dbReference>
<dbReference type="Antibodypedia" id="4091">
    <property type="antibodies" value="265 antibodies from 33 providers"/>
</dbReference>
<dbReference type="DNASU" id="29993"/>
<dbReference type="Ensembl" id="ENST00000244458.7">
    <property type="protein sequence ID" value="ENSP00000244458.2"/>
    <property type="gene ID" value="ENSG00000124507.11"/>
</dbReference>
<dbReference type="Ensembl" id="ENST00000538621.2">
    <property type="protein sequence ID" value="ENSP00000439639.1"/>
    <property type="gene ID" value="ENSG00000124507.11"/>
</dbReference>
<dbReference type="Ensembl" id="ENST00000620693.4">
    <property type="protein sequence ID" value="ENSP00000484060.1"/>
    <property type="gene ID" value="ENSG00000124507.11"/>
</dbReference>
<dbReference type="GeneID" id="29993"/>
<dbReference type="KEGG" id="hsa:29993"/>
<dbReference type="MANE-Select" id="ENST00000244458.7">
    <property type="protein sequence ID" value="ENSP00000244458.2"/>
    <property type="RefSeq nucleotide sequence ID" value="NM_020804.5"/>
    <property type="RefSeq protein sequence ID" value="NP_065855.1"/>
</dbReference>
<dbReference type="UCSC" id="uc003ojo.5">
    <property type="organism name" value="human"/>
</dbReference>
<dbReference type="AGR" id="HGNC:8570"/>
<dbReference type="CTD" id="29993"/>
<dbReference type="DisGeNET" id="29993"/>
<dbReference type="GeneCards" id="PACSIN1"/>
<dbReference type="HGNC" id="HGNC:8570">
    <property type="gene designation" value="PACSIN1"/>
</dbReference>
<dbReference type="HPA" id="ENSG00000124507">
    <property type="expression patterns" value="Group enriched (brain, retina)"/>
</dbReference>
<dbReference type="MIM" id="606512">
    <property type="type" value="gene"/>
</dbReference>
<dbReference type="neXtProt" id="NX_Q9BY11"/>
<dbReference type="OpenTargets" id="ENSG00000124507"/>
<dbReference type="PharmGKB" id="PA32896"/>
<dbReference type="VEuPathDB" id="HostDB:ENSG00000124507"/>
<dbReference type="eggNOG" id="KOG2856">
    <property type="taxonomic scope" value="Eukaryota"/>
</dbReference>
<dbReference type="GeneTree" id="ENSGT00950000182973"/>
<dbReference type="HOGENOM" id="CLU_030752_0_0_1"/>
<dbReference type="InParanoid" id="Q9BY11"/>
<dbReference type="OMA" id="ACQMKEL"/>
<dbReference type="OrthoDB" id="10255128at2759"/>
<dbReference type="PAN-GO" id="Q9BY11">
    <property type="GO annotations" value="9 GO annotations based on evolutionary models"/>
</dbReference>
<dbReference type="PhylomeDB" id="Q9BY11"/>
<dbReference type="TreeFam" id="TF313677"/>
<dbReference type="PathwayCommons" id="Q9BY11"/>
<dbReference type="Reactome" id="R-HSA-8856828">
    <property type="pathway name" value="Clathrin-mediated endocytosis"/>
</dbReference>
<dbReference type="SignaLink" id="Q9BY11"/>
<dbReference type="SIGNOR" id="Q9BY11"/>
<dbReference type="BioGRID-ORCS" id="29993">
    <property type="hits" value="12 hits in 1146 CRISPR screens"/>
</dbReference>
<dbReference type="CD-CODE" id="FB4E32DD">
    <property type="entry name" value="Presynaptic clusters and postsynaptic densities"/>
</dbReference>
<dbReference type="ChiTaRS" id="PACSIN1">
    <property type="organism name" value="human"/>
</dbReference>
<dbReference type="EvolutionaryTrace" id="Q9BY11"/>
<dbReference type="GeneWiki" id="PACSIN1"/>
<dbReference type="GenomeRNAi" id="29993"/>
<dbReference type="Pharos" id="Q9BY11">
    <property type="development level" value="Tbio"/>
</dbReference>
<dbReference type="PRO" id="PR:Q9BY11"/>
<dbReference type="Proteomes" id="UP000005640">
    <property type="component" value="Chromosome 6"/>
</dbReference>
<dbReference type="RNAct" id="Q9BY11">
    <property type="molecule type" value="protein"/>
</dbReference>
<dbReference type="Bgee" id="ENSG00000124507">
    <property type="expression patterns" value="Expressed in right frontal lobe and 179 other cell types or tissues"/>
</dbReference>
<dbReference type="ExpressionAtlas" id="Q9BY11">
    <property type="expression patterns" value="baseline and differential"/>
</dbReference>
<dbReference type="GO" id="GO:0043679">
    <property type="term" value="C:axon terminus"/>
    <property type="evidence" value="ECO:0000250"/>
    <property type="project" value="UniProtKB"/>
</dbReference>
<dbReference type="GO" id="GO:0030137">
    <property type="term" value="C:COPI-coated vesicle"/>
    <property type="evidence" value="ECO:0007669"/>
    <property type="project" value="Ensembl"/>
</dbReference>
<dbReference type="GO" id="GO:0005737">
    <property type="term" value="C:cytoplasm"/>
    <property type="evidence" value="ECO:0000314"/>
    <property type="project" value="LIFEdb"/>
</dbReference>
<dbReference type="GO" id="GO:0030659">
    <property type="term" value="C:cytoplasmic vesicle membrane"/>
    <property type="evidence" value="ECO:0007669"/>
    <property type="project" value="UniProtKB-SubCell"/>
</dbReference>
<dbReference type="GO" id="GO:0005829">
    <property type="term" value="C:cytosol"/>
    <property type="evidence" value="ECO:0007669"/>
    <property type="project" value="UniProtKB-SubCell"/>
</dbReference>
<dbReference type="GO" id="GO:0005768">
    <property type="term" value="C:endosome"/>
    <property type="evidence" value="ECO:0000318"/>
    <property type="project" value="GO_Central"/>
</dbReference>
<dbReference type="GO" id="GO:0048471">
    <property type="term" value="C:perinuclear region of cytoplasm"/>
    <property type="evidence" value="ECO:0000250"/>
    <property type="project" value="BHF-UCL"/>
</dbReference>
<dbReference type="GO" id="GO:0098684">
    <property type="term" value="C:photoreceptor ribbon synapse"/>
    <property type="evidence" value="ECO:0007669"/>
    <property type="project" value="Ensembl"/>
</dbReference>
<dbReference type="GO" id="GO:0005886">
    <property type="term" value="C:plasma membrane"/>
    <property type="evidence" value="ECO:0000250"/>
    <property type="project" value="BHF-UCL"/>
</dbReference>
<dbReference type="GO" id="GO:0098833">
    <property type="term" value="C:presynaptic endocytic zone"/>
    <property type="evidence" value="ECO:0007669"/>
    <property type="project" value="Ensembl"/>
</dbReference>
<dbReference type="GO" id="GO:0032587">
    <property type="term" value="C:ruffle membrane"/>
    <property type="evidence" value="ECO:0000250"/>
    <property type="project" value="UniProtKB"/>
</dbReference>
<dbReference type="GO" id="GO:0045202">
    <property type="term" value="C:synapse"/>
    <property type="evidence" value="ECO:0000250"/>
    <property type="project" value="BHF-UCL"/>
</dbReference>
<dbReference type="GO" id="GO:0008092">
    <property type="term" value="F:cytoskeletal protein binding"/>
    <property type="evidence" value="ECO:0007669"/>
    <property type="project" value="Ensembl"/>
</dbReference>
<dbReference type="GO" id="GO:0042802">
    <property type="term" value="F:identical protein binding"/>
    <property type="evidence" value="ECO:0007669"/>
    <property type="project" value="Ensembl"/>
</dbReference>
<dbReference type="GO" id="GO:0005543">
    <property type="term" value="F:phospholipid binding"/>
    <property type="evidence" value="ECO:0000314"/>
    <property type="project" value="UniProtKB"/>
</dbReference>
<dbReference type="GO" id="GO:0007015">
    <property type="term" value="P:actin filament organization"/>
    <property type="evidence" value="ECO:0007669"/>
    <property type="project" value="InterPro"/>
</dbReference>
<dbReference type="GO" id="GO:0007010">
    <property type="term" value="P:cytoskeleton organization"/>
    <property type="evidence" value="ECO:0000318"/>
    <property type="project" value="GO_Central"/>
</dbReference>
<dbReference type="GO" id="GO:0045806">
    <property type="term" value="P:negative regulation of endocytosis"/>
    <property type="evidence" value="ECO:0007669"/>
    <property type="project" value="Ensembl"/>
</dbReference>
<dbReference type="GO" id="GO:0048812">
    <property type="term" value="P:neuron projection morphogenesis"/>
    <property type="evidence" value="ECO:0000250"/>
    <property type="project" value="UniProtKB"/>
</dbReference>
<dbReference type="GO" id="GO:0097320">
    <property type="term" value="P:plasma membrane tubulation"/>
    <property type="evidence" value="ECO:0000314"/>
    <property type="project" value="UniProtKB"/>
</dbReference>
<dbReference type="GO" id="GO:1900006">
    <property type="term" value="P:positive regulation of dendrite development"/>
    <property type="evidence" value="ECO:0000250"/>
    <property type="project" value="BHF-UCL"/>
</dbReference>
<dbReference type="GO" id="GO:0072657">
    <property type="term" value="P:protein localization to membrane"/>
    <property type="evidence" value="ECO:0000250"/>
    <property type="project" value="UniProtKB"/>
</dbReference>
<dbReference type="GO" id="GO:0072659">
    <property type="term" value="P:protein localization to plasma membrane"/>
    <property type="evidence" value="ECO:0000250"/>
    <property type="project" value="BHF-UCL"/>
</dbReference>
<dbReference type="GO" id="GO:0030100">
    <property type="term" value="P:regulation of endocytosis"/>
    <property type="evidence" value="ECO:0000318"/>
    <property type="project" value="GO_Central"/>
</dbReference>
<dbReference type="GO" id="GO:0048488">
    <property type="term" value="P:synaptic vesicle endocytosis"/>
    <property type="evidence" value="ECO:0000250"/>
    <property type="project" value="UniProtKB"/>
</dbReference>
<dbReference type="CDD" id="cd07680">
    <property type="entry name" value="F-BAR_PACSIN1"/>
    <property type="match status" value="1"/>
</dbReference>
<dbReference type="CDD" id="cd11998">
    <property type="entry name" value="SH3_PACSIN1-2"/>
    <property type="match status" value="1"/>
</dbReference>
<dbReference type="FunFam" id="2.30.30.40:FF:000014">
    <property type="entry name" value="Kinase C and casein kinase substrate in neurons protein"/>
    <property type="match status" value="1"/>
</dbReference>
<dbReference type="FunFam" id="1.20.1270.60:FF:000205">
    <property type="entry name" value="Protein kinase C and casein kinase substrate in neurons protein 1"/>
    <property type="match status" value="1"/>
</dbReference>
<dbReference type="Gene3D" id="1.20.1270.60">
    <property type="entry name" value="Arfaptin homology (AH) domain/BAR domain"/>
    <property type="match status" value="1"/>
</dbReference>
<dbReference type="Gene3D" id="2.30.30.40">
    <property type="entry name" value="SH3 Domains"/>
    <property type="match status" value="1"/>
</dbReference>
<dbReference type="InterPro" id="IPR027267">
    <property type="entry name" value="AH/BAR_dom_sf"/>
</dbReference>
<dbReference type="InterPro" id="IPR031160">
    <property type="entry name" value="F_BAR"/>
</dbReference>
<dbReference type="InterPro" id="IPR001060">
    <property type="entry name" value="FCH_dom"/>
</dbReference>
<dbReference type="InterPro" id="IPR035743">
    <property type="entry name" value="PACSIN1/PACSIN2_SH3"/>
</dbReference>
<dbReference type="InterPro" id="IPR037454">
    <property type="entry name" value="PACSIN1_F-BAR"/>
</dbReference>
<dbReference type="InterPro" id="IPR036028">
    <property type="entry name" value="SH3-like_dom_sf"/>
</dbReference>
<dbReference type="InterPro" id="IPR001452">
    <property type="entry name" value="SH3_domain"/>
</dbReference>
<dbReference type="PANTHER" id="PTHR23065">
    <property type="entry name" value="PROLINE-SERINE-THREONINE PHOSPHATASE INTERACTING PROTEIN 1"/>
    <property type="match status" value="1"/>
</dbReference>
<dbReference type="PANTHER" id="PTHR23065:SF16">
    <property type="entry name" value="PROTEIN KINASE C AND CASEIN KINASE SUBSTRATE IN NEURONS PROTEIN 1"/>
    <property type="match status" value="1"/>
</dbReference>
<dbReference type="Pfam" id="PF00611">
    <property type="entry name" value="FCH"/>
    <property type="match status" value="1"/>
</dbReference>
<dbReference type="Pfam" id="PF14604">
    <property type="entry name" value="SH3_9"/>
    <property type="match status" value="1"/>
</dbReference>
<dbReference type="PRINTS" id="PR00452">
    <property type="entry name" value="SH3DOMAIN"/>
</dbReference>
<dbReference type="SMART" id="SM00055">
    <property type="entry name" value="FCH"/>
    <property type="match status" value="1"/>
</dbReference>
<dbReference type="SMART" id="SM00326">
    <property type="entry name" value="SH3"/>
    <property type="match status" value="1"/>
</dbReference>
<dbReference type="SUPFAM" id="SSF103657">
    <property type="entry name" value="BAR/IMD domain-like"/>
    <property type="match status" value="1"/>
</dbReference>
<dbReference type="SUPFAM" id="SSF50044">
    <property type="entry name" value="SH3-domain"/>
    <property type="match status" value="1"/>
</dbReference>
<dbReference type="PROSITE" id="PS51741">
    <property type="entry name" value="F_BAR"/>
    <property type="match status" value="1"/>
</dbReference>
<dbReference type="PROSITE" id="PS50002">
    <property type="entry name" value="SH3"/>
    <property type="match status" value="1"/>
</dbReference>
<evidence type="ECO:0000250" key="1"/>
<evidence type="ECO:0000250" key="2">
    <source>
        <dbReference type="UniProtKB" id="Q61644"/>
    </source>
</evidence>
<evidence type="ECO:0000250" key="3">
    <source>
        <dbReference type="UniProtKB" id="Q9Z0W5"/>
    </source>
</evidence>
<evidence type="ECO:0000255" key="4">
    <source>
        <dbReference type="PROSITE-ProRule" id="PRU00192"/>
    </source>
</evidence>
<evidence type="ECO:0000255" key="5">
    <source>
        <dbReference type="PROSITE-ProRule" id="PRU01077"/>
    </source>
</evidence>
<evidence type="ECO:0000256" key="6">
    <source>
        <dbReference type="SAM" id="MobiDB-lite"/>
    </source>
</evidence>
<evidence type="ECO:0000269" key="7">
    <source>
    </source>
</evidence>
<evidence type="ECO:0000269" key="8">
    <source>
    </source>
</evidence>
<evidence type="ECO:0000269" key="9">
    <source>
    </source>
</evidence>
<evidence type="ECO:0000269" key="10">
    <source>
    </source>
</evidence>
<evidence type="ECO:0000305" key="11"/>
<evidence type="ECO:0007829" key="12">
    <source>
        <dbReference type="PDB" id="3HAH"/>
    </source>
</evidence>
<evidence type="ECO:0007829" key="13">
    <source>
        <dbReference type="PDB" id="3HAI"/>
    </source>
</evidence>
<organism>
    <name type="scientific">Homo sapiens</name>
    <name type="common">Human</name>
    <dbReference type="NCBI Taxonomy" id="9606"/>
    <lineage>
        <taxon>Eukaryota</taxon>
        <taxon>Metazoa</taxon>
        <taxon>Chordata</taxon>
        <taxon>Craniata</taxon>
        <taxon>Vertebrata</taxon>
        <taxon>Euteleostomi</taxon>
        <taxon>Mammalia</taxon>
        <taxon>Eutheria</taxon>
        <taxon>Euarchontoglires</taxon>
        <taxon>Primates</taxon>
        <taxon>Haplorrhini</taxon>
        <taxon>Catarrhini</taxon>
        <taxon>Hominidae</taxon>
        <taxon>Homo</taxon>
    </lineage>
</organism>
<protein>
    <recommendedName>
        <fullName>Protein kinase C and casein kinase substrate in neurons protein 1</fullName>
    </recommendedName>
    <alternativeName>
        <fullName>Syndapin-1</fullName>
    </alternativeName>
</protein>
<keyword id="KW-0002">3D-structure</keyword>
<keyword id="KW-1003">Cell membrane</keyword>
<keyword id="KW-0966">Cell projection</keyword>
<keyword id="KW-0175">Coiled coil</keyword>
<keyword id="KW-0963">Cytoplasm</keyword>
<keyword id="KW-0968">Cytoplasmic vesicle</keyword>
<keyword id="KW-0254">Endocytosis</keyword>
<keyword id="KW-0446">Lipid-binding</keyword>
<keyword id="KW-0472">Membrane</keyword>
<keyword id="KW-0597">Phosphoprotein</keyword>
<keyword id="KW-1267">Proteomics identification</keyword>
<keyword id="KW-1185">Reference proteome</keyword>
<keyword id="KW-0728">SH3 domain</keyword>
<keyword id="KW-0770">Synapse</keyword>
<keyword id="KW-0771">Synaptosome</keyword>
<reference key="1">
    <citation type="journal article" date="2001" name="Gene">
        <title>PACSIN 3 is a novel SH3 domain cytoplasmic adapter protein of the pacsin-syndapin-FAP52 gene family.</title>
        <authorList>
            <person name="Sumoy L."/>
            <person name="Pluvinet R."/>
            <person name="Andreu N."/>
            <person name="Estivill X."/>
            <person name="Escarceller M."/>
        </authorList>
    </citation>
    <scope>NUCLEOTIDE SEQUENCE [MRNA]</scope>
    <scope>TISSUE SPECIFICITY</scope>
</reference>
<reference key="2">
    <citation type="journal article" date="2000" name="DNA Res.">
        <title>Prediction of the coding sequences of unidentified human genes. XVI. The complete sequences of 150 new cDNA clones from brain which code for large proteins in vitro.</title>
        <authorList>
            <person name="Nagase T."/>
            <person name="Kikuno R."/>
            <person name="Ishikawa K."/>
            <person name="Hirosawa M."/>
            <person name="Ohara O."/>
        </authorList>
    </citation>
    <scope>NUCLEOTIDE SEQUENCE [LARGE SCALE MRNA]</scope>
    <source>
        <tissue>Brain</tissue>
    </source>
</reference>
<reference key="3">
    <citation type="journal article" date="2002" name="DNA Res.">
        <title>Construction of expression-ready cDNA clones for KIAA genes: manual curation of 330 KIAA cDNA clones.</title>
        <authorList>
            <person name="Nakajima D."/>
            <person name="Okazaki N."/>
            <person name="Yamakawa H."/>
            <person name="Kikuno R."/>
            <person name="Ohara O."/>
            <person name="Nagase T."/>
        </authorList>
    </citation>
    <scope>SEQUENCE REVISION</scope>
</reference>
<reference key="4">
    <citation type="journal article" date="2007" name="BMC Genomics">
        <title>The full-ORF clone resource of the German cDNA consortium.</title>
        <authorList>
            <person name="Bechtel S."/>
            <person name="Rosenfelder H."/>
            <person name="Duda A."/>
            <person name="Schmidt C.P."/>
            <person name="Ernst U."/>
            <person name="Wellenreuther R."/>
            <person name="Mehrle A."/>
            <person name="Schuster C."/>
            <person name="Bahr A."/>
            <person name="Bloecker H."/>
            <person name="Heubner D."/>
            <person name="Hoerlein A."/>
            <person name="Michel G."/>
            <person name="Wedler H."/>
            <person name="Koehrer K."/>
            <person name="Ottenwaelder B."/>
            <person name="Poustka A."/>
            <person name="Wiemann S."/>
            <person name="Schupp I."/>
        </authorList>
    </citation>
    <scope>NUCLEOTIDE SEQUENCE [LARGE SCALE MRNA]</scope>
    <source>
        <tissue>Amygdala</tissue>
    </source>
</reference>
<reference key="5">
    <citation type="journal article" date="2004" name="Genome Res.">
        <title>The status, quality, and expansion of the NIH full-length cDNA project: the Mammalian Gene Collection (MGC).</title>
        <authorList>
            <consortium name="The MGC Project Team"/>
        </authorList>
    </citation>
    <scope>NUCLEOTIDE SEQUENCE [LARGE SCALE MRNA]</scope>
    <source>
        <tissue>Brain</tissue>
    </source>
</reference>
<reference key="6">
    <citation type="journal article" date="2012" name="PLoS ONE">
        <title>Versatile membrane deformation potential of activated pacsin.</title>
        <authorList>
            <person name="Goh S.L."/>
            <person name="Wang Q."/>
            <person name="Byrnes L.J."/>
            <person name="Sondermann H."/>
        </authorList>
    </citation>
    <scope>FUNCTION</scope>
    <scope>INTERACTION WITH DNM1</scope>
    <scope>SUBCELLULAR LOCATION</scope>
    <scope>DOMAIN</scope>
</reference>
<reference key="7">
    <citation type="journal article" date="2009" name="Proc. Natl. Acad. Sci. U.S.A.">
        <title>Molecular mechanism of membrane constriction and tubulation mediated by the F-BAR protein Pacsin/Syndapin.</title>
        <authorList>
            <person name="Wang Q."/>
            <person name="Navarro M.V."/>
            <person name="Peng G."/>
            <person name="Molinelli E."/>
            <person name="Goh S.L."/>
            <person name="Judson B.L."/>
            <person name="Rajashankar K.R."/>
            <person name="Sondermann H."/>
        </authorList>
    </citation>
    <scope>X-RAY CRYSTALLOGRAPHY (2.77 ANGSTROMS) OF 1-325</scope>
    <scope>FUNCTION</scope>
    <scope>LIPID-BINDING</scope>
    <scope>SUBUNIT</scope>
    <scope>SUBCELLULAR LOCATION</scope>
    <scope>MUTAGENESIS OF ILE-125 AND MET-126</scope>
    <scope>DOMAIN</scope>
</reference>
<reference key="8">
    <citation type="journal article" date="2012" name="J. Biol. Chem.">
        <title>Rigidity of wedge loop in PACSIN 3 protein is a key factor in dictating diameters of tubules.</title>
        <authorList>
            <person name="Bai X."/>
            <person name="Meng G."/>
            <person name="Luo M."/>
            <person name="Zheng X."/>
        </authorList>
    </citation>
    <scope>X-RAY CRYSTALLOGRAPHY (2.8 ANGSTROMS) OF 14-308</scope>
    <scope>FUNCTION</scope>
    <scope>DOMAIN</scope>
</reference>